<evidence type="ECO:0000255" key="1">
    <source>
        <dbReference type="HAMAP-Rule" id="MF_01358"/>
    </source>
</evidence>
<proteinExistence type="inferred from homology"/>
<gene>
    <name evidence="1" type="primary">nuoD1</name>
    <name type="ordered locus">SAV_4840</name>
</gene>
<organism>
    <name type="scientific">Streptomyces avermitilis (strain ATCC 31267 / DSM 46492 / JCM 5070 / NBRC 14893 / NCIMB 12804 / NRRL 8165 / MA-4680)</name>
    <dbReference type="NCBI Taxonomy" id="227882"/>
    <lineage>
        <taxon>Bacteria</taxon>
        <taxon>Bacillati</taxon>
        <taxon>Actinomycetota</taxon>
        <taxon>Actinomycetes</taxon>
        <taxon>Kitasatosporales</taxon>
        <taxon>Streptomycetaceae</taxon>
        <taxon>Streptomyces</taxon>
    </lineage>
</organism>
<comment type="function">
    <text evidence="1">NDH-1 shuttles electrons from NADH, via FMN and iron-sulfur (Fe-S) centers, to quinones in the respiratory chain. The immediate electron acceptor for the enzyme in this species is believed to be a menaquinone. Couples the redox reaction to proton translocation (for every two electrons transferred, four hydrogen ions are translocated across the cytoplasmic membrane), and thus conserves the redox energy in a proton gradient.</text>
</comment>
<comment type="catalytic activity">
    <reaction evidence="1">
        <text>a quinone + NADH + 5 H(+)(in) = a quinol + NAD(+) + 4 H(+)(out)</text>
        <dbReference type="Rhea" id="RHEA:57888"/>
        <dbReference type="ChEBI" id="CHEBI:15378"/>
        <dbReference type="ChEBI" id="CHEBI:24646"/>
        <dbReference type="ChEBI" id="CHEBI:57540"/>
        <dbReference type="ChEBI" id="CHEBI:57945"/>
        <dbReference type="ChEBI" id="CHEBI:132124"/>
    </reaction>
</comment>
<comment type="subunit">
    <text evidence="1">NDH-1 is composed of 14 different subunits. Subunits NuoB, C, D, E, F, and G constitute the peripheral sector of the complex.</text>
</comment>
<comment type="subcellular location">
    <subcellularLocation>
        <location evidence="1">Cell membrane</location>
        <topology evidence="1">Peripheral membrane protein</topology>
        <orientation evidence="1">Cytoplasmic side</orientation>
    </subcellularLocation>
</comment>
<comment type="similarity">
    <text evidence="1">Belongs to the complex I 49 kDa subunit family.</text>
</comment>
<dbReference type="EC" id="7.1.1.-" evidence="1"/>
<dbReference type="EMBL" id="BA000030">
    <property type="protein sequence ID" value="BAC72552.1"/>
    <property type="molecule type" value="Genomic_DNA"/>
</dbReference>
<dbReference type="RefSeq" id="WP_010986261.1">
    <property type="nucleotide sequence ID" value="NZ_JZJK01000077.1"/>
</dbReference>
<dbReference type="SMR" id="Q82DX8"/>
<dbReference type="GeneID" id="41541920"/>
<dbReference type="KEGG" id="sma:SAVERM_4840"/>
<dbReference type="eggNOG" id="COG0649">
    <property type="taxonomic scope" value="Bacteria"/>
</dbReference>
<dbReference type="HOGENOM" id="CLU_015134_1_2_11"/>
<dbReference type="OrthoDB" id="9801496at2"/>
<dbReference type="Proteomes" id="UP000000428">
    <property type="component" value="Chromosome"/>
</dbReference>
<dbReference type="GO" id="GO:0005886">
    <property type="term" value="C:plasma membrane"/>
    <property type="evidence" value="ECO:0007669"/>
    <property type="project" value="UniProtKB-SubCell"/>
</dbReference>
<dbReference type="GO" id="GO:0051287">
    <property type="term" value="F:NAD binding"/>
    <property type="evidence" value="ECO:0007669"/>
    <property type="project" value="InterPro"/>
</dbReference>
<dbReference type="GO" id="GO:0050136">
    <property type="term" value="F:NADH:ubiquinone reductase (non-electrogenic) activity"/>
    <property type="evidence" value="ECO:0007669"/>
    <property type="project" value="UniProtKB-UniRule"/>
</dbReference>
<dbReference type="GO" id="GO:0048038">
    <property type="term" value="F:quinone binding"/>
    <property type="evidence" value="ECO:0007669"/>
    <property type="project" value="UniProtKB-KW"/>
</dbReference>
<dbReference type="Gene3D" id="1.10.645.10">
    <property type="entry name" value="Cytochrome-c3 Hydrogenase, chain B"/>
    <property type="match status" value="1"/>
</dbReference>
<dbReference type="HAMAP" id="MF_01358">
    <property type="entry name" value="NDH1_NuoD"/>
    <property type="match status" value="1"/>
</dbReference>
<dbReference type="InterPro" id="IPR001135">
    <property type="entry name" value="NADH_Q_OxRdtase_suD"/>
</dbReference>
<dbReference type="InterPro" id="IPR014029">
    <property type="entry name" value="NADH_UbQ_OxRdtase_49kDa_CS"/>
</dbReference>
<dbReference type="InterPro" id="IPR022885">
    <property type="entry name" value="NDH1_su_D/H"/>
</dbReference>
<dbReference type="InterPro" id="IPR029014">
    <property type="entry name" value="NiFe-Hase_large"/>
</dbReference>
<dbReference type="NCBIfam" id="TIGR01962">
    <property type="entry name" value="NuoD"/>
    <property type="match status" value="1"/>
</dbReference>
<dbReference type="NCBIfam" id="NF004739">
    <property type="entry name" value="PRK06075.1"/>
    <property type="match status" value="1"/>
</dbReference>
<dbReference type="PANTHER" id="PTHR11993:SF10">
    <property type="entry name" value="NADH DEHYDROGENASE [UBIQUINONE] IRON-SULFUR PROTEIN 2, MITOCHONDRIAL"/>
    <property type="match status" value="1"/>
</dbReference>
<dbReference type="PANTHER" id="PTHR11993">
    <property type="entry name" value="NADH-UBIQUINONE OXIDOREDUCTASE 49 KDA SUBUNIT"/>
    <property type="match status" value="1"/>
</dbReference>
<dbReference type="Pfam" id="PF00346">
    <property type="entry name" value="Complex1_49kDa"/>
    <property type="match status" value="1"/>
</dbReference>
<dbReference type="SUPFAM" id="SSF56762">
    <property type="entry name" value="HydB/Nqo4-like"/>
    <property type="match status" value="1"/>
</dbReference>
<dbReference type="PROSITE" id="PS00535">
    <property type="entry name" value="COMPLEX1_49K"/>
    <property type="match status" value="1"/>
</dbReference>
<protein>
    <recommendedName>
        <fullName evidence="1">NADH-quinone oxidoreductase subunit D 1</fullName>
        <ecNumber evidence="1">7.1.1.-</ecNumber>
    </recommendedName>
    <alternativeName>
        <fullName evidence="1">NADH dehydrogenase I subunit D 1</fullName>
    </alternativeName>
    <alternativeName>
        <fullName evidence="1">NDH-1 subunit D 1</fullName>
    </alternativeName>
</protein>
<accession>Q82DX8</accession>
<name>NUOD1_STRAW</name>
<keyword id="KW-1003">Cell membrane</keyword>
<keyword id="KW-0472">Membrane</keyword>
<keyword id="KW-0520">NAD</keyword>
<keyword id="KW-0874">Quinone</keyword>
<keyword id="KW-1185">Reference proteome</keyword>
<keyword id="KW-1278">Translocase</keyword>
<keyword id="KW-0813">Transport</keyword>
<feature type="chain" id="PRO_0000357937" description="NADH-quinone oxidoreductase subunit D 1">
    <location>
        <begin position="1"/>
        <end position="443"/>
    </location>
</feature>
<reference key="1">
    <citation type="journal article" date="2003" name="Nat. Biotechnol.">
        <title>Complete genome sequence and comparative analysis of the industrial microorganism Streptomyces avermitilis.</title>
        <authorList>
            <person name="Ikeda H."/>
            <person name="Ishikawa J."/>
            <person name="Hanamoto A."/>
            <person name="Shinose M."/>
            <person name="Kikuchi H."/>
            <person name="Shiba T."/>
            <person name="Sakaki Y."/>
            <person name="Hattori M."/>
            <person name="Omura S."/>
        </authorList>
    </citation>
    <scope>NUCLEOTIDE SEQUENCE [LARGE SCALE GENOMIC DNA]</scope>
    <source>
        <strain>ATCC 31267 / DSM 46492 / JCM 5070 / NBRC 14893 / NCIMB 12804 / NRRL 8165 / MA-4680</strain>
    </source>
</reference>
<reference key="2">
    <citation type="journal article" date="2001" name="Proc. Natl. Acad. Sci. U.S.A.">
        <title>Genome sequence of an industrial microorganism Streptomyces avermitilis: deducing the ability of producing secondary metabolites.</title>
        <authorList>
            <person name="Omura S."/>
            <person name="Ikeda H."/>
            <person name="Ishikawa J."/>
            <person name="Hanamoto A."/>
            <person name="Takahashi C."/>
            <person name="Shinose M."/>
            <person name="Takahashi Y."/>
            <person name="Horikawa H."/>
            <person name="Nakazawa H."/>
            <person name="Osonoe T."/>
            <person name="Kikuchi H."/>
            <person name="Shiba T."/>
            <person name="Sakaki Y."/>
            <person name="Hattori M."/>
        </authorList>
    </citation>
    <scope>NUCLEOTIDE SEQUENCE [LARGE SCALE GENOMIC DNA]</scope>
    <source>
        <strain>ATCC 31267 / DSM 46492 / JCM 5070 / NBRC 14893 / NCIMB 12804 / NRRL 8165 / MA-4680</strain>
    </source>
</reference>
<sequence length="443" mass="48618">MSTSHASAASARETTEGTVYTVTGGDWDEVVQSAAKSDDERIVVNMGPQHPSTHGVLRLILEIDGETVTEARCGIGYLHTGIEKNLEYRTWTQGTTFVTRMDYLTPFFNETAYCLAVEKLLGIENEIPDRASIIRVLLMELNRMSSHLVCIATGGMELGATTIMIYGFRDRELILDIYELITGLRMNHAYIRPGGLAQDLPPGAVDQIREFVKKMKKNLPEYDKLATGNPIFKARMQDVGYLDLAGCMALGATGPILRSAGLPHDLRKSQPYCGYETYDFDVPTADTCDSYGRFLIRLEEMRQSLRIVEQCLDRLAPGPVMVADKKIAWPAQLALGPDGLGNSLDHIKKIMGTSMEALIHHFKLVTEGFRVPPGQTYSAVESPKGELGVHAVSDGGTRPYRVHFRDPSFTNLQAMAAMCEGGQVADVIVAVASIDPVMGGVDR</sequence>